<gene>
    <name evidence="1" type="primary">tatE</name>
    <name type="ordered locus">NT01EI_2949</name>
</gene>
<keyword id="KW-0997">Cell inner membrane</keyword>
<keyword id="KW-1003">Cell membrane</keyword>
<keyword id="KW-0472">Membrane</keyword>
<keyword id="KW-0653">Protein transport</keyword>
<keyword id="KW-0811">Translocation</keyword>
<keyword id="KW-0812">Transmembrane</keyword>
<keyword id="KW-1133">Transmembrane helix</keyword>
<keyword id="KW-0813">Transport</keyword>
<accession>C5BGE0</accession>
<name>TATE_EDWI9</name>
<proteinExistence type="inferred from homology"/>
<evidence type="ECO:0000255" key="1">
    <source>
        <dbReference type="HAMAP-Rule" id="MF_00903"/>
    </source>
</evidence>
<evidence type="ECO:0000256" key="2">
    <source>
        <dbReference type="SAM" id="MobiDB-lite"/>
    </source>
</evidence>
<organism>
    <name type="scientific">Edwardsiella ictaluri (strain 93-146)</name>
    <dbReference type="NCBI Taxonomy" id="634503"/>
    <lineage>
        <taxon>Bacteria</taxon>
        <taxon>Pseudomonadati</taxon>
        <taxon>Pseudomonadota</taxon>
        <taxon>Gammaproteobacteria</taxon>
        <taxon>Enterobacterales</taxon>
        <taxon>Hafniaceae</taxon>
        <taxon>Edwardsiella</taxon>
    </lineage>
</organism>
<dbReference type="EMBL" id="CP001600">
    <property type="protein sequence ID" value="ACR70103.1"/>
    <property type="molecule type" value="Genomic_DNA"/>
</dbReference>
<dbReference type="RefSeq" id="WP_015872196.1">
    <property type="nucleotide sequence ID" value="NZ_CP169062.1"/>
</dbReference>
<dbReference type="SMR" id="C5BGE0"/>
<dbReference type="STRING" id="67780.B6E78_06650"/>
<dbReference type="GeneID" id="69539832"/>
<dbReference type="KEGG" id="eic:NT01EI_2949"/>
<dbReference type="PATRIC" id="fig|634503.3.peg.2636"/>
<dbReference type="HOGENOM" id="CLU_086034_5_3_6"/>
<dbReference type="OrthoDB" id="7066617at2"/>
<dbReference type="Proteomes" id="UP000001485">
    <property type="component" value="Chromosome"/>
</dbReference>
<dbReference type="GO" id="GO:0033281">
    <property type="term" value="C:TAT protein transport complex"/>
    <property type="evidence" value="ECO:0007669"/>
    <property type="project" value="UniProtKB-UniRule"/>
</dbReference>
<dbReference type="GO" id="GO:0008320">
    <property type="term" value="F:protein transmembrane transporter activity"/>
    <property type="evidence" value="ECO:0007669"/>
    <property type="project" value="UniProtKB-UniRule"/>
</dbReference>
<dbReference type="GO" id="GO:0043953">
    <property type="term" value="P:protein transport by the Tat complex"/>
    <property type="evidence" value="ECO:0007669"/>
    <property type="project" value="UniProtKB-UniRule"/>
</dbReference>
<dbReference type="Gene3D" id="1.20.5.3310">
    <property type="match status" value="1"/>
</dbReference>
<dbReference type="HAMAP" id="MF_00236">
    <property type="entry name" value="TatA_E"/>
    <property type="match status" value="1"/>
</dbReference>
<dbReference type="HAMAP" id="MF_00903">
    <property type="entry name" value="TatE"/>
    <property type="match status" value="1"/>
</dbReference>
<dbReference type="InterPro" id="IPR003369">
    <property type="entry name" value="TatA/B/E"/>
</dbReference>
<dbReference type="InterPro" id="IPR006312">
    <property type="entry name" value="TatA/E"/>
</dbReference>
<dbReference type="InterPro" id="IPR024905">
    <property type="entry name" value="TatE"/>
</dbReference>
<dbReference type="NCBIfam" id="NF002448">
    <property type="entry name" value="PRK01614.1"/>
    <property type="match status" value="1"/>
</dbReference>
<dbReference type="NCBIfam" id="NF002960">
    <property type="entry name" value="PRK03625.1"/>
    <property type="match status" value="1"/>
</dbReference>
<dbReference type="NCBIfam" id="TIGR01411">
    <property type="entry name" value="tatAE"/>
    <property type="match status" value="1"/>
</dbReference>
<dbReference type="PANTHER" id="PTHR42982">
    <property type="entry name" value="SEC-INDEPENDENT PROTEIN TRANSLOCASE PROTEIN TATA"/>
    <property type="match status" value="1"/>
</dbReference>
<dbReference type="PANTHER" id="PTHR42982:SF5">
    <property type="entry name" value="SEC-INDEPENDENT PROTEIN TRANSLOCASE PROTEIN TATE"/>
    <property type="match status" value="1"/>
</dbReference>
<dbReference type="Pfam" id="PF02416">
    <property type="entry name" value="TatA_B_E"/>
    <property type="match status" value="1"/>
</dbReference>
<comment type="function">
    <text evidence="1">Part of the twin-arginine translocation (Tat) system that transports large folded proteins containing a characteristic twin-arginine motif in their signal peptide across membranes. TatE shares overlapping functions with TatA.</text>
</comment>
<comment type="subcellular location">
    <subcellularLocation>
        <location evidence="1">Cell inner membrane</location>
        <topology evidence="1">Single-pass membrane protein</topology>
    </subcellularLocation>
</comment>
<comment type="similarity">
    <text evidence="1">Belongs to the TatA/E family. TatE subfamily.</text>
</comment>
<feature type="chain" id="PRO_0000412962" description="Probable Sec-independent protein translocase protein TatE">
    <location>
        <begin position="1"/>
        <end position="66"/>
    </location>
</feature>
<feature type="transmembrane region" description="Helical" evidence="1">
    <location>
        <begin position="1"/>
        <end position="21"/>
    </location>
</feature>
<feature type="region of interest" description="Disordered" evidence="2">
    <location>
        <begin position="46"/>
        <end position="66"/>
    </location>
</feature>
<reference key="1">
    <citation type="submission" date="2009-03" db="EMBL/GenBank/DDBJ databases">
        <title>Complete genome sequence of Edwardsiella ictaluri 93-146.</title>
        <authorList>
            <person name="Williams M.L."/>
            <person name="Gillaspy A.F."/>
            <person name="Dyer D.W."/>
            <person name="Thune R.L."/>
            <person name="Waldbieser G.C."/>
            <person name="Schuster S.C."/>
            <person name="Gipson J."/>
            <person name="Zaitshik J."/>
            <person name="Landry C."/>
            <person name="Lawrence M.L."/>
        </authorList>
    </citation>
    <scope>NUCLEOTIDE SEQUENCE [LARGE SCALE GENOMIC DNA]</scope>
    <source>
        <strain>93-146</strain>
    </source>
</reference>
<protein>
    <recommendedName>
        <fullName evidence="1">Probable Sec-independent protein translocase protein TatE</fullName>
    </recommendedName>
</protein>
<sequence>MEGISITKLLVIAVLIVLLFGTNKLRTLGSDLGAALKGFKKAMNDETPAAKKSDGVEAAPRVENKE</sequence>